<name>PLA2_WALAE</name>
<evidence type="ECO:0000250" key="1">
    <source>
        <dbReference type="UniProtKB" id="A6MEY4"/>
    </source>
</evidence>
<evidence type="ECO:0000250" key="2">
    <source>
        <dbReference type="UniProtKB" id="Q9DF52"/>
    </source>
</evidence>
<evidence type="ECO:0000269" key="3">
    <source>
    </source>
</evidence>
<evidence type="ECO:0000303" key="4">
    <source>
    </source>
</evidence>
<evidence type="ECO:0000305" key="5"/>
<evidence type="ECO:0000305" key="6">
    <source>
    </source>
</evidence>
<organism>
    <name type="scientific">Walterinnesia aegyptia</name>
    <name type="common">Desert black snake</name>
    <dbReference type="NCBI Taxonomy" id="64182"/>
    <lineage>
        <taxon>Eukaryota</taxon>
        <taxon>Metazoa</taxon>
        <taxon>Chordata</taxon>
        <taxon>Craniata</taxon>
        <taxon>Vertebrata</taxon>
        <taxon>Euteleostomi</taxon>
        <taxon>Lepidosauria</taxon>
        <taxon>Squamata</taxon>
        <taxon>Bifurcata</taxon>
        <taxon>Unidentata</taxon>
        <taxon>Episquamata</taxon>
        <taxon>Toxicofera</taxon>
        <taxon>Serpentes</taxon>
        <taxon>Colubroidea</taxon>
        <taxon>Elapidae</taxon>
        <taxon>Elapinae</taxon>
        <taxon>Walterinnesia</taxon>
    </lineage>
</organism>
<keyword id="KW-0044">Antibiotic</keyword>
<keyword id="KW-0929">Antimicrobial</keyword>
<keyword id="KW-0106">Calcium</keyword>
<keyword id="KW-0204">Cytolysis</keyword>
<keyword id="KW-0903">Direct protein sequencing</keyword>
<keyword id="KW-1015">Disulfide bond</keyword>
<keyword id="KW-0325">Glycoprotein</keyword>
<keyword id="KW-0354">Hemolysis</keyword>
<keyword id="KW-0378">Hydrolase</keyword>
<keyword id="KW-0442">Lipid degradation</keyword>
<keyword id="KW-0443">Lipid metabolism</keyword>
<keyword id="KW-0479">Metal-binding</keyword>
<keyword id="KW-0964">Secreted</keyword>
<proteinExistence type="evidence at protein level"/>
<comment type="function">
    <text evidence="3">Relatively highly potent phospholipase A2 that displays potent antimicrobial and hemolytic activities. It does not show cytotoxic effects on the three human cell lines tested. PLA2 catalyzes the calcium-dependent hydrolysis of the 2-acyl groups in 3-sn-phosphoglycerides. It shows similar potencies on both Gram-negative and Gram-positive bacteria: B.cereus (MIC&gt;9 ug/ml), B.subtilis (MIC&gt;12 ug/ml), E.faecalis (MIC&gt;7 ug/ml), S.epidermidis (MIC&gt;12 ug/ml), S.aureux (MIC&gt;5 ug/ml), E.coli (MIC&gt;7 ug/ml), K.pneumonia (MIC&gt;8 ug/ml), P.aeruginosa (MIC&gt;10 ug/ml), and S.enteric (MIC&gt;9 ug/ml). It also shows antifungal activities: A.niger (MIC&gt;15 ug/ml), B.cinerea (MIC&gt;12 ug/ml), F.solani (MIC&gt;15 ug/ml), and P.digitatum (MIC&gt;10 ug/ml).</text>
</comment>
<comment type="catalytic activity">
    <reaction evidence="5">
        <text>a 1,2-diacyl-sn-glycero-3-phosphocholine + H2O = a 1-acyl-sn-glycero-3-phosphocholine + a fatty acid + H(+)</text>
        <dbReference type="Rhea" id="RHEA:15801"/>
        <dbReference type="ChEBI" id="CHEBI:15377"/>
        <dbReference type="ChEBI" id="CHEBI:15378"/>
        <dbReference type="ChEBI" id="CHEBI:28868"/>
        <dbReference type="ChEBI" id="CHEBI:57643"/>
        <dbReference type="ChEBI" id="CHEBI:58168"/>
        <dbReference type="EC" id="3.1.1.4"/>
    </reaction>
</comment>
<comment type="cofactor">
    <cofactor evidence="3">
        <name>Ca(2+)</name>
        <dbReference type="ChEBI" id="CHEBI:29108"/>
    </cofactor>
</comment>
<comment type="activity regulation">
    <text evidence="3">Enzymatic activity is diminished by Cd(2+) and Hg(2+).</text>
</comment>
<comment type="biophysicochemical properties">
    <kinetics>
        <Vmax evidence="3">2100.0 umol/min/mg enzyme</Vmax>
    </kinetics>
    <phDependence>
        <text evidence="3">Optimum pH is 8.5.</text>
    </phDependence>
    <temperatureDependence>
        <text evidence="3">Optimum temperature is 45 degrees Celsius.</text>
    </temperatureDependence>
</comment>
<comment type="subunit">
    <text evidence="3">Homodimer.</text>
</comment>
<comment type="subcellular location">
    <subcellularLocation>
        <location evidence="3">Secreted</location>
    </subcellularLocation>
</comment>
<comment type="tissue specificity">
    <text evidence="6">Expressed by the venom gland.</text>
</comment>
<comment type="PTM">
    <text evidence="3">Glycosylated.</text>
</comment>
<comment type="similarity">
    <text evidence="5">Belongs to the phospholipase A2 family. Group I subfamily.</text>
</comment>
<feature type="chain" id="PRO_0000446236" description="Non-toxic phospholipase A2" evidence="3">
    <location>
        <begin position="1"/>
        <end position="30" status="greater than"/>
    </location>
</feature>
<feature type="binding site" evidence="2">
    <location>
        <position position="26"/>
    </location>
    <ligand>
        <name>Ca(2+)</name>
        <dbReference type="ChEBI" id="CHEBI:29108"/>
    </ligand>
</feature>
<feature type="binding site" evidence="2">
    <location>
        <position position="28"/>
    </location>
    <ligand>
        <name>Ca(2+)</name>
        <dbReference type="ChEBI" id="CHEBI:29108"/>
    </ligand>
</feature>
<feature type="binding site" evidence="2">
    <location>
        <position position="30"/>
    </location>
    <ligand>
        <name>Ca(2+)</name>
        <dbReference type="ChEBI" id="CHEBI:29108"/>
    </ligand>
</feature>
<feature type="disulfide bond" description="Interchain" evidence="1">
    <location>
        <position position="17"/>
    </location>
</feature>
<feature type="non-terminal residue">
    <location>
        <position position="30"/>
    </location>
</feature>
<dbReference type="EC" id="3.1.1.4" evidence="5"/>
<dbReference type="SMR" id="P0DQD1"/>
<dbReference type="GO" id="GO:0005576">
    <property type="term" value="C:extracellular region"/>
    <property type="evidence" value="ECO:0007669"/>
    <property type="project" value="UniProtKB-SubCell"/>
</dbReference>
<dbReference type="GO" id="GO:0005509">
    <property type="term" value="F:calcium ion binding"/>
    <property type="evidence" value="ECO:0007669"/>
    <property type="project" value="InterPro"/>
</dbReference>
<dbReference type="GO" id="GO:0004623">
    <property type="term" value="F:phospholipase A2 activity"/>
    <property type="evidence" value="ECO:0007669"/>
    <property type="project" value="UniProtKB-EC"/>
</dbReference>
<dbReference type="GO" id="GO:0050482">
    <property type="term" value="P:arachidonate secretion"/>
    <property type="evidence" value="ECO:0007669"/>
    <property type="project" value="InterPro"/>
</dbReference>
<dbReference type="GO" id="GO:0042742">
    <property type="term" value="P:defense response to bacterium"/>
    <property type="evidence" value="ECO:0007669"/>
    <property type="project" value="UniProtKB-KW"/>
</dbReference>
<dbReference type="GO" id="GO:0031640">
    <property type="term" value="P:killing of cells of another organism"/>
    <property type="evidence" value="ECO:0007669"/>
    <property type="project" value="UniProtKB-KW"/>
</dbReference>
<dbReference type="GO" id="GO:0016042">
    <property type="term" value="P:lipid catabolic process"/>
    <property type="evidence" value="ECO:0007669"/>
    <property type="project" value="UniProtKB-KW"/>
</dbReference>
<dbReference type="GO" id="GO:0006644">
    <property type="term" value="P:phospholipid metabolic process"/>
    <property type="evidence" value="ECO:0007669"/>
    <property type="project" value="InterPro"/>
</dbReference>
<dbReference type="Gene3D" id="1.20.90.10">
    <property type="entry name" value="Phospholipase A2 domain"/>
    <property type="match status" value="1"/>
</dbReference>
<dbReference type="InterPro" id="IPR001211">
    <property type="entry name" value="PLipase_A2"/>
</dbReference>
<dbReference type="InterPro" id="IPR036444">
    <property type="entry name" value="PLipase_A2_dom_sf"/>
</dbReference>
<dbReference type="PRINTS" id="PR00389">
    <property type="entry name" value="PHPHLIPASEA2"/>
</dbReference>
<dbReference type="SUPFAM" id="SSF48619">
    <property type="entry name" value="Phospholipase A2, PLA2"/>
    <property type="match status" value="1"/>
</dbReference>
<sequence>NLYQFKNMVQCVGTQLCVAYVKYGCYCGPG</sequence>
<protein>
    <recommendedName>
        <fullName evidence="4">Non-toxic phospholipase A2</fullName>
        <shortName evidence="4">WaPLA2</shortName>
        <shortName evidence="5">svPLA2</shortName>
    </recommendedName>
    <alternativeName>
        <fullName evidence="5">Phosphatidylcholine 2-acylhydrolase</fullName>
        <ecNumber evidence="5">3.1.1.4</ecNumber>
    </alternativeName>
</protein>
<accession>P0DQD1</accession>
<reference key="1">
    <citation type="journal article" date="2018" name="Int. J. Biol. Macromol.">
        <title>A novel bactericidal homodimeric PLA2 group-I from Walterinnesia aegyptia venom.</title>
        <authorList>
            <person name="Ben Bacha A."/>
            <person name="Alonazi M.A."/>
            <person name="Elshikh M.S."/>
            <person name="Karray A."/>
        </authorList>
    </citation>
    <scope>PROTEIN SEQUENCE</scope>
    <scope>FUNCTION</scope>
    <scope>SUBUNIT</scope>
    <scope>ACTIVITY REGULATION</scope>
    <scope>BIOPHYSICOCHEMICAL PROPERTIES</scope>
    <scope>COFACTOR</scope>
    <scope>SUBCELLULAR LOCATION</scope>
    <source>
        <tissue>Venom</tissue>
    </source>
</reference>